<protein>
    <recommendedName>
        <fullName evidence="4">Protein transport protein Sec23A</fullName>
    </recommendedName>
    <alternativeName>
        <fullName>SEC23-related protein A</fullName>
    </alternativeName>
</protein>
<keyword id="KW-0007">Acetylation</keyword>
<keyword id="KW-0963">Cytoplasm</keyword>
<keyword id="KW-0968">Cytoplasmic vesicle</keyword>
<keyword id="KW-0256">Endoplasmic reticulum</keyword>
<keyword id="KW-0931">ER-Golgi transport</keyword>
<keyword id="KW-0472">Membrane</keyword>
<keyword id="KW-0479">Metal-binding</keyword>
<keyword id="KW-0597">Phosphoprotein</keyword>
<keyword id="KW-0653">Protein transport</keyword>
<keyword id="KW-1185">Reference proteome</keyword>
<keyword id="KW-0813">Transport</keyword>
<keyword id="KW-0862">Zinc</keyword>
<dbReference type="EMBL" id="BC133300">
    <property type="protein sequence ID" value="AAI33301.1"/>
    <property type="molecule type" value="mRNA"/>
</dbReference>
<dbReference type="RefSeq" id="NP_001075073.1">
    <property type="nucleotide sequence ID" value="NM_001081604.1"/>
</dbReference>
<dbReference type="SMR" id="A2VDL8"/>
<dbReference type="FunCoup" id="A2VDL8">
    <property type="interactions" value="1577"/>
</dbReference>
<dbReference type="STRING" id="9913.ENSBTAP00000004831"/>
<dbReference type="PaxDb" id="9913-ENSBTAP00000004831"/>
<dbReference type="PeptideAtlas" id="A2VDL8"/>
<dbReference type="KEGG" id="bta:533994"/>
<dbReference type="CTD" id="10484"/>
<dbReference type="eggNOG" id="KOG1986">
    <property type="taxonomic scope" value="Eukaryota"/>
</dbReference>
<dbReference type="HOGENOM" id="CLU_008658_3_0_1"/>
<dbReference type="InParanoid" id="A2VDL8"/>
<dbReference type="OrthoDB" id="10256289at2759"/>
<dbReference type="Proteomes" id="UP000009136">
    <property type="component" value="Unplaced"/>
</dbReference>
<dbReference type="GO" id="GO:0030127">
    <property type="term" value="C:COPII vesicle coat"/>
    <property type="evidence" value="ECO:0000250"/>
    <property type="project" value="UniProtKB"/>
</dbReference>
<dbReference type="GO" id="GO:0005829">
    <property type="term" value="C:cytosol"/>
    <property type="evidence" value="ECO:0000250"/>
    <property type="project" value="UniProtKB"/>
</dbReference>
<dbReference type="GO" id="GO:0070971">
    <property type="term" value="C:endoplasmic reticulum exit site"/>
    <property type="evidence" value="ECO:0000250"/>
    <property type="project" value="UniProtKB"/>
</dbReference>
<dbReference type="GO" id="GO:0005789">
    <property type="term" value="C:endoplasmic reticulum membrane"/>
    <property type="evidence" value="ECO:0007669"/>
    <property type="project" value="UniProtKB-SubCell"/>
</dbReference>
<dbReference type="GO" id="GO:0005096">
    <property type="term" value="F:GTPase activator activity"/>
    <property type="evidence" value="ECO:0000318"/>
    <property type="project" value="GO_Central"/>
</dbReference>
<dbReference type="GO" id="GO:0008270">
    <property type="term" value="F:zinc ion binding"/>
    <property type="evidence" value="ECO:0000250"/>
    <property type="project" value="UniProtKB"/>
</dbReference>
<dbReference type="GO" id="GO:0090110">
    <property type="term" value="P:COPII-coated vesicle cargo loading"/>
    <property type="evidence" value="ECO:0000250"/>
    <property type="project" value="UniProtKB"/>
</dbReference>
<dbReference type="GO" id="GO:0006886">
    <property type="term" value="P:intracellular protein transport"/>
    <property type="evidence" value="ECO:0007669"/>
    <property type="project" value="InterPro"/>
</dbReference>
<dbReference type="CDD" id="cd01478">
    <property type="entry name" value="Sec23-like"/>
    <property type="match status" value="1"/>
</dbReference>
<dbReference type="CDD" id="cd11287">
    <property type="entry name" value="Sec23_C"/>
    <property type="match status" value="1"/>
</dbReference>
<dbReference type="FunFam" id="1.20.120.730:FF:000003">
    <property type="entry name" value="Protein transport protein SEC23"/>
    <property type="match status" value="1"/>
</dbReference>
<dbReference type="FunFam" id="2.30.30.380:FF:000001">
    <property type="entry name" value="Protein transport protein SEC23"/>
    <property type="match status" value="1"/>
</dbReference>
<dbReference type="FunFam" id="2.60.40.1670:FF:000006">
    <property type="entry name" value="Protein transport protein SEC23"/>
    <property type="match status" value="1"/>
</dbReference>
<dbReference type="FunFam" id="3.40.20.10:FF:000003">
    <property type="entry name" value="Protein transport protein SEC23"/>
    <property type="match status" value="1"/>
</dbReference>
<dbReference type="FunFam" id="3.40.50.410:FF:000011">
    <property type="entry name" value="Protein transport protein SEC23"/>
    <property type="match status" value="1"/>
</dbReference>
<dbReference type="Gene3D" id="2.60.40.1670">
    <property type="entry name" value="beta-sandwich domain of Sec23/24"/>
    <property type="match status" value="1"/>
</dbReference>
<dbReference type="Gene3D" id="1.20.120.730">
    <property type="entry name" value="Sec23/Sec24 helical domain"/>
    <property type="match status" value="1"/>
</dbReference>
<dbReference type="Gene3D" id="3.40.20.10">
    <property type="entry name" value="Severin"/>
    <property type="match status" value="1"/>
</dbReference>
<dbReference type="Gene3D" id="3.40.50.410">
    <property type="entry name" value="von Willebrand factor, type A domain"/>
    <property type="match status" value="1"/>
</dbReference>
<dbReference type="Gene3D" id="2.30.30.380">
    <property type="entry name" value="Zn-finger domain of Sec23/24"/>
    <property type="match status" value="1"/>
</dbReference>
<dbReference type="InterPro" id="IPR029006">
    <property type="entry name" value="ADF-H/Gelsolin-like_dom_sf"/>
</dbReference>
<dbReference type="InterPro" id="IPR007123">
    <property type="entry name" value="Gelsolin-like_dom"/>
</dbReference>
<dbReference type="InterPro" id="IPR036180">
    <property type="entry name" value="Gelsolin-like_dom_sf"/>
</dbReference>
<dbReference type="InterPro" id="IPR037364">
    <property type="entry name" value="Sec23"/>
</dbReference>
<dbReference type="InterPro" id="IPR006900">
    <property type="entry name" value="Sec23/24_helical_dom"/>
</dbReference>
<dbReference type="InterPro" id="IPR036175">
    <property type="entry name" value="Sec23/24_helical_dom_sf"/>
</dbReference>
<dbReference type="InterPro" id="IPR006896">
    <property type="entry name" value="Sec23/24_trunk_dom"/>
</dbReference>
<dbReference type="InterPro" id="IPR012990">
    <property type="entry name" value="Sec23_24_beta_S"/>
</dbReference>
<dbReference type="InterPro" id="IPR037550">
    <property type="entry name" value="Sec23_C"/>
</dbReference>
<dbReference type="InterPro" id="IPR036465">
    <property type="entry name" value="vWFA_dom_sf"/>
</dbReference>
<dbReference type="InterPro" id="IPR006895">
    <property type="entry name" value="Znf_Sec23_Sec24"/>
</dbReference>
<dbReference type="InterPro" id="IPR036174">
    <property type="entry name" value="Znf_Sec23_Sec24_sf"/>
</dbReference>
<dbReference type="PANTHER" id="PTHR11141">
    <property type="entry name" value="PROTEIN TRANSPORT PROTEIN SEC23"/>
    <property type="match status" value="1"/>
</dbReference>
<dbReference type="PANTHER" id="PTHR11141:SF7">
    <property type="entry name" value="PROTEIN TRANSPORT PROTEIN SEC23A"/>
    <property type="match status" value="1"/>
</dbReference>
<dbReference type="Pfam" id="PF00626">
    <property type="entry name" value="Gelsolin"/>
    <property type="match status" value="1"/>
</dbReference>
<dbReference type="Pfam" id="PF08033">
    <property type="entry name" value="Sec23_BS"/>
    <property type="match status" value="1"/>
</dbReference>
<dbReference type="Pfam" id="PF04815">
    <property type="entry name" value="Sec23_helical"/>
    <property type="match status" value="1"/>
</dbReference>
<dbReference type="Pfam" id="PF04811">
    <property type="entry name" value="Sec23_trunk"/>
    <property type="match status" value="1"/>
</dbReference>
<dbReference type="Pfam" id="PF04810">
    <property type="entry name" value="zf-Sec23_Sec24"/>
    <property type="match status" value="1"/>
</dbReference>
<dbReference type="SUPFAM" id="SSF81995">
    <property type="entry name" value="beta-sandwich domain of Sec23/24"/>
    <property type="match status" value="1"/>
</dbReference>
<dbReference type="SUPFAM" id="SSF82754">
    <property type="entry name" value="C-terminal, gelsolin-like domain of Sec23/24"/>
    <property type="match status" value="1"/>
</dbReference>
<dbReference type="SUPFAM" id="SSF81811">
    <property type="entry name" value="Helical domain of Sec23/24"/>
    <property type="match status" value="1"/>
</dbReference>
<dbReference type="SUPFAM" id="SSF53300">
    <property type="entry name" value="vWA-like"/>
    <property type="match status" value="1"/>
</dbReference>
<dbReference type="SUPFAM" id="SSF82919">
    <property type="entry name" value="Zn-finger domain of Sec23/24"/>
    <property type="match status" value="1"/>
</dbReference>
<reference key="1">
    <citation type="submission" date="2007-02" db="EMBL/GenBank/DDBJ databases">
        <authorList>
            <consortium name="NIH - Mammalian Gene Collection (MGC) project"/>
        </authorList>
    </citation>
    <scope>NUCLEOTIDE SEQUENCE [LARGE SCALE MRNA]</scope>
    <source>
        <strain>Hereford</strain>
        <tissue>Fetal muscle</tissue>
    </source>
</reference>
<accession>A2VDL8</accession>
<name>SC23A_BOVIN</name>
<organism>
    <name type="scientific">Bos taurus</name>
    <name type="common">Bovine</name>
    <dbReference type="NCBI Taxonomy" id="9913"/>
    <lineage>
        <taxon>Eukaryota</taxon>
        <taxon>Metazoa</taxon>
        <taxon>Chordata</taxon>
        <taxon>Craniata</taxon>
        <taxon>Vertebrata</taxon>
        <taxon>Euteleostomi</taxon>
        <taxon>Mammalia</taxon>
        <taxon>Eutheria</taxon>
        <taxon>Laurasiatheria</taxon>
        <taxon>Artiodactyla</taxon>
        <taxon>Ruminantia</taxon>
        <taxon>Pecora</taxon>
        <taxon>Bovidae</taxon>
        <taxon>Bovinae</taxon>
        <taxon>Bos</taxon>
    </lineage>
</organism>
<feature type="initiator methionine" description="Removed" evidence="2">
    <location>
        <position position="1"/>
    </location>
</feature>
<feature type="chain" id="PRO_0000290334" description="Protein transport protein Sec23A">
    <location>
        <begin position="2"/>
        <end position="768"/>
    </location>
</feature>
<feature type="repeat" description="Gelsolin-like" evidence="3">
    <location>
        <begin position="632"/>
        <end position="718"/>
    </location>
</feature>
<feature type="binding site" evidence="2">
    <location>
        <position position="61"/>
    </location>
    <ligand>
        <name>Zn(2+)</name>
        <dbReference type="ChEBI" id="CHEBI:29105"/>
    </ligand>
</feature>
<feature type="binding site" evidence="2">
    <location>
        <position position="66"/>
    </location>
    <ligand>
        <name>Zn(2+)</name>
        <dbReference type="ChEBI" id="CHEBI:29105"/>
    </ligand>
</feature>
<feature type="binding site" evidence="2">
    <location>
        <position position="85"/>
    </location>
    <ligand>
        <name>Zn(2+)</name>
        <dbReference type="ChEBI" id="CHEBI:29105"/>
    </ligand>
</feature>
<feature type="binding site" evidence="2">
    <location>
        <position position="88"/>
    </location>
    <ligand>
        <name>Zn(2+)</name>
        <dbReference type="ChEBI" id="CHEBI:29105"/>
    </ligand>
</feature>
<feature type="modified residue" description="N-acetylthreonine" evidence="2">
    <location>
        <position position="2"/>
    </location>
</feature>
<feature type="modified residue" description="Phosphothreonine" evidence="2">
    <location>
        <position position="308"/>
    </location>
</feature>
<sequence length="768" mass="86674">MTTYLEFIQQNEERDGVRFSWNVWPSSRLEATRMVVPVAALFTPLKERPDLPPIQYEPVLCSRTTCRAVLNPLCQVDYRAKLWACNFCYQRNQFPPTYAGISELNQPAELLPQFSSIEYVVLRGPQMPLIFLYVVDTCMEDEDLQALKESMQMSLSLLPPTALVGLITFGRMVQVHELGCEGISKSYVFRGTKDLSAKQLQEMLGLSKVPVTQATRGPQVQQPPPSNRFLQPVQKIDMNLTDLLGELQRDPWPVPQGKRPLRSSGVALSIAVGLLECTFPNTGARIMMFIGGPATQGPGMVVGDELKTPIRSWHDIEKDNAKYVKKGTKHFEALANRAATTGHVIDIYACALDQTGLLEMKCCPNLTGGYMVMGDSFNTSLFKQTFQRVFTKDMHGQFKMGFGGTLEIKTSREIKISGAIGPCVSLNSKGPCVSENEIGTGGTCQWKICGLSPTTTLAIYFEVVNQHNAPIPQGGRGAIQFVTQYQHSSGQRRIRVTTIARNWADAQTQIQNIAASFDQEAAAILMARLAIYRAETEEGPDVLRWLDRQLIRLCQKFGEYHKDDPSSFRFSETFSLYPQFMFHLRRSPFLQVFNNSPDESSYYRHHFMRQDLTQSLIMIQPILYAYSFSGPPEPVLLDSSSILADRILLMDTFFQILIYHGETIAQWRKSGYQDMPEYENFRHLLQAPVDDAQEILHSRFPMPRYIDTEHGGSQARFLLSKVNPSQTHNNMYAWGQESGAPILTDDVSLQVFMDHLKKTCCVKCCLMC</sequence>
<evidence type="ECO:0000250" key="1">
    <source>
        <dbReference type="UniProtKB" id="Q01405"/>
    </source>
</evidence>
<evidence type="ECO:0000250" key="2">
    <source>
        <dbReference type="UniProtKB" id="Q15436"/>
    </source>
</evidence>
<evidence type="ECO:0000255" key="3"/>
<evidence type="ECO:0000305" key="4"/>
<gene>
    <name evidence="2" type="primary">SEC23A</name>
</gene>
<proteinExistence type="evidence at transcript level"/>
<comment type="function">
    <text evidence="1 2">Component of the coat protein complex II (COPII) which promotes the formation of transport vesicles from the endoplasmic reticulum (ER). The coat has two main functions, the physical deformation of the endoplasmic reticulum membrane into vesicles and the selection of cargo molecules for their transport to the Golgi complex. Required for the translocation of insulin-induced glucose transporter SLC2A4/GLUT4 to the cell membrane.</text>
</comment>
<comment type="subunit">
    <text evidence="2">COPII is composed of at least five proteins: the Sec23/24 complex, the Sec13/31 complex and Sar1. Interacts with SEC23IP. Interacts with HTR4. Interacts with SEC16A (By similarity). Interacts with SLC6A4 (By similarity). Interacts (as part of the Sec23/24 complex) with SEC22B; recruits SEC22B into COPII-coated vesicles and allows the transport of this cargo from the endoplasmic reticulum to the Golgi. Interacts (via Gelsolin-like repeat) with MIA2 and MIA3; specifically involved in the transport of large cargos like the collagen COL7A1. Interacts with DDHD1 (By similarity). Interacts with TMEM39A (By similarity). Interacts with SACM1L; this interaction is reduced in the absence of TMEM39A (By similarity). Interacts with kinase FAM20C; transport of FAM20C from the endoplasmic reticulum to the Golgi is likely to be mediated by COPII vesicles (By similarity).</text>
</comment>
<comment type="subcellular location">
    <subcellularLocation>
        <location evidence="2">Cytoplasmic vesicle</location>
        <location evidence="2">COPII-coated vesicle membrane</location>
        <topology evidence="2">Peripheral membrane protein</topology>
        <orientation evidence="2">Cytoplasmic side</orientation>
    </subcellularLocation>
    <subcellularLocation>
        <location evidence="2">Endoplasmic reticulum membrane</location>
        <topology evidence="2">Peripheral membrane protein</topology>
        <orientation evidence="2">Cytoplasmic side</orientation>
    </subcellularLocation>
    <subcellularLocation>
        <location evidence="2">Cytoplasm</location>
        <location evidence="2">Cytosol</location>
    </subcellularLocation>
    <text evidence="2">Enriched at endoplasmic reticulum exit sites (ERES), also known as transitional endoplasmic reticulum (tER).</text>
</comment>
<comment type="domain">
    <text evidence="2">The Gelsolin-like repeat mediates interaction with proteins containing PPP motifs that include MIA2, MIA3 but also SEC31A. These interactions are probably competitive.</text>
</comment>
<comment type="similarity">
    <text evidence="4">Belongs to the SEC23/SEC24 family. SEC23 subfamily.</text>
</comment>